<dbReference type="EC" id="2.7.11.22"/>
<dbReference type="EC" id="2.7.11.23"/>
<dbReference type="EMBL" id="BA000052">
    <property type="protein sequence ID" value="BAE60857.1"/>
    <property type="status" value="ALT_SEQ"/>
    <property type="molecule type" value="Genomic_DNA"/>
</dbReference>
<dbReference type="SMR" id="Q2UC58"/>
<dbReference type="STRING" id="510516.Q2UC58"/>
<dbReference type="Proteomes" id="UP000006564">
    <property type="component" value="Chromosome 4"/>
</dbReference>
<dbReference type="GO" id="GO:1990508">
    <property type="term" value="C:CKM complex"/>
    <property type="evidence" value="ECO:0007669"/>
    <property type="project" value="EnsemblFungi"/>
</dbReference>
<dbReference type="GO" id="GO:0016592">
    <property type="term" value="C:mediator complex"/>
    <property type="evidence" value="ECO:0007669"/>
    <property type="project" value="EnsemblFungi"/>
</dbReference>
<dbReference type="GO" id="GO:0005524">
    <property type="term" value="F:ATP binding"/>
    <property type="evidence" value="ECO:0007669"/>
    <property type="project" value="UniProtKB-KW"/>
</dbReference>
<dbReference type="GO" id="GO:0004693">
    <property type="term" value="F:cyclin-dependent protein serine/threonine kinase activity"/>
    <property type="evidence" value="ECO:0007669"/>
    <property type="project" value="UniProtKB-EC"/>
</dbReference>
<dbReference type="GO" id="GO:0046872">
    <property type="term" value="F:metal ion binding"/>
    <property type="evidence" value="ECO:0007669"/>
    <property type="project" value="UniProtKB-KW"/>
</dbReference>
<dbReference type="GO" id="GO:0106310">
    <property type="term" value="F:protein serine kinase activity"/>
    <property type="evidence" value="ECO:0007669"/>
    <property type="project" value="RHEA"/>
</dbReference>
<dbReference type="GO" id="GO:0008353">
    <property type="term" value="F:RNA polymerase II CTD heptapeptide repeat kinase activity"/>
    <property type="evidence" value="ECO:0007669"/>
    <property type="project" value="UniProtKB-EC"/>
</dbReference>
<dbReference type="GO" id="GO:0060258">
    <property type="term" value="P:negative regulation of filamentous growth"/>
    <property type="evidence" value="ECO:0007669"/>
    <property type="project" value="EnsemblFungi"/>
</dbReference>
<dbReference type="GO" id="GO:0000122">
    <property type="term" value="P:negative regulation of transcription by RNA polymerase II"/>
    <property type="evidence" value="ECO:0007669"/>
    <property type="project" value="EnsemblFungi"/>
</dbReference>
<dbReference type="GO" id="GO:0070481">
    <property type="term" value="P:nuclear-transcribed mRNA catabolic process, non-stop decay"/>
    <property type="evidence" value="ECO:0007669"/>
    <property type="project" value="EnsemblFungi"/>
</dbReference>
<dbReference type="GO" id="GO:0045944">
    <property type="term" value="P:positive regulation of transcription by RNA polymerase II"/>
    <property type="evidence" value="ECO:0007669"/>
    <property type="project" value="EnsemblFungi"/>
</dbReference>
<dbReference type="GO" id="GO:0031648">
    <property type="term" value="P:protein destabilization"/>
    <property type="evidence" value="ECO:0007669"/>
    <property type="project" value="EnsemblFungi"/>
</dbReference>
<dbReference type="CDD" id="cd07842">
    <property type="entry name" value="STKc_CDK8_like"/>
    <property type="match status" value="1"/>
</dbReference>
<dbReference type="FunFam" id="1.10.510.10:FF:000408">
    <property type="entry name" value="Serine/threonine-protein kinase SSN3"/>
    <property type="match status" value="1"/>
</dbReference>
<dbReference type="FunFam" id="3.30.200.20:FF:000426">
    <property type="entry name" value="Serine/threonine-protein kinase ssn3"/>
    <property type="match status" value="1"/>
</dbReference>
<dbReference type="Gene3D" id="3.30.200.20">
    <property type="entry name" value="Phosphorylase Kinase, domain 1"/>
    <property type="match status" value="1"/>
</dbReference>
<dbReference type="Gene3D" id="1.10.510.10">
    <property type="entry name" value="Transferase(Phosphotransferase) domain 1"/>
    <property type="match status" value="1"/>
</dbReference>
<dbReference type="InterPro" id="IPR050108">
    <property type="entry name" value="CDK"/>
</dbReference>
<dbReference type="InterPro" id="IPR011009">
    <property type="entry name" value="Kinase-like_dom_sf"/>
</dbReference>
<dbReference type="InterPro" id="IPR000719">
    <property type="entry name" value="Prot_kinase_dom"/>
</dbReference>
<dbReference type="InterPro" id="IPR008271">
    <property type="entry name" value="Ser/Thr_kinase_AS"/>
</dbReference>
<dbReference type="PANTHER" id="PTHR24056">
    <property type="entry name" value="CELL DIVISION PROTEIN KINASE"/>
    <property type="match status" value="1"/>
</dbReference>
<dbReference type="PANTHER" id="PTHR24056:SF495">
    <property type="entry name" value="CYCLIN-DEPENDENT KINASE 8-RELATED"/>
    <property type="match status" value="1"/>
</dbReference>
<dbReference type="Pfam" id="PF00069">
    <property type="entry name" value="Pkinase"/>
    <property type="match status" value="1"/>
</dbReference>
<dbReference type="SMART" id="SM00220">
    <property type="entry name" value="S_TKc"/>
    <property type="match status" value="1"/>
</dbReference>
<dbReference type="SUPFAM" id="SSF56112">
    <property type="entry name" value="Protein kinase-like (PK-like)"/>
    <property type="match status" value="1"/>
</dbReference>
<dbReference type="PROSITE" id="PS50011">
    <property type="entry name" value="PROTEIN_KINASE_DOM"/>
    <property type="match status" value="1"/>
</dbReference>
<dbReference type="PROSITE" id="PS00108">
    <property type="entry name" value="PROTEIN_KINASE_ST"/>
    <property type="match status" value="1"/>
</dbReference>
<proteinExistence type="inferred from homology"/>
<feature type="chain" id="PRO_0000312936" description="Serine/threonine-protein kinase SSN3">
    <location>
        <begin position="1"/>
        <end position="413"/>
    </location>
</feature>
<feature type="domain" description="Protein kinase" evidence="2">
    <location>
        <begin position="26"/>
        <end position="355"/>
    </location>
</feature>
<feature type="region of interest" description="Disordered" evidence="4">
    <location>
        <begin position="376"/>
        <end position="413"/>
    </location>
</feature>
<feature type="compositionally biased region" description="Basic and acidic residues" evidence="4">
    <location>
        <begin position="376"/>
        <end position="385"/>
    </location>
</feature>
<feature type="active site" description="Proton acceptor" evidence="2 3">
    <location>
        <position position="158"/>
    </location>
</feature>
<feature type="binding site" evidence="2">
    <location>
        <begin position="32"/>
        <end position="40"/>
    </location>
    <ligand>
        <name>ATP</name>
        <dbReference type="ChEBI" id="CHEBI:30616"/>
    </ligand>
</feature>
<feature type="binding site" evidence="2">
    <location>
        <position position="56"/>
    </location>
    <ligand>
        <name>ATP</name>
        <dbReference type="ChEBI" id="CHEBI:30616"/>
    </ligand>
</feature>
<comment type="function">
    <text evidence="1">Component of the srb8-11 complex. The srb8-11 complex is a regulatory module of the Mediator complex which is itself involved in regulation of basal and activated RNA polymerase II-dependent transcription. The srb8-11 complex may be involved in the transcriptional repression of a subset of genes regulated by Mediator. It may inhibit the association of the Mediator complex with RNA polymerase II to form the holoenzyme complex. The srb8-11 complex phosphorylates the C-terminal domain (CTD) of the largest subunit of RNA polymerase II (By similarity).</text>
</comment>
<comment type="catalytic activity">
    <reaction>
        <text>L-seryl-[protein] + ATP = O-phospho-L-seryl-[protein] + ADP + H(+)</text>
        <dbReference type="Rhea" id="RHEA:17989"/>
        <dbReference type="Rhea" id="RHEA-COMP:9863"/>
        <dbReference type="Rhea" id="RHEA-COMP:11604"/>
        <dbReference type="ChEBI" id="CHEBI:15378"/>
        <dbReference type="ChEBI" id="CHEBI:29999"/>
        <dbReference type="ChEBI" id="CHEBI:30616"/>
        <dbReference type="ChEBI" id="CHEBI:83421"/>
        <dbReference type="ChEBI" id="CHEBI:456216"/>
        <dbReference type="EC" id="2.7.11.22"/>
    </reaction>
</comment>
<comment type="catalytic activity">
    <reaction>
        <text>L-threonyl-[protein] + ATP = O-phospho-L-threonyl-[protein] + ADP + H(+)</text>
        <dbReference type="Rhea" id="RHEA:46608"/>
        <dbReference type="Rhea" id="RHEA-COMP:11060"/>
        <dbReference type="Rhea" id="RHEA-COMP:11605"/>
        <dbReference type="ChEBI" id="CHEBI:15378"/>
        <dbReference type="ChEBI" id="CHEBI:30013"/>
        <dbReference type="ChEBI" id="CHEBI:30616"/>
        <dbReference type="ChEBI" id="CHEBI:61977"/>
        <dbReference type="ChEBI" id="CHEBI:456216"/>
        <dbReference type="EC" id="2.7.11.22"/>
    </reaction>
</comment>
<comment type="catalytic activity">
    <reaction>
        <text>[DNA-directed RNA polymerase] + ATP = phospho-[DNA-directed RNA polymerase] + ADP + H(+)</text>
        <dbReference type="Rhea" id="RHEA:10216"/>
        <dbReference type="Rhea" id="RHEA-COMP:11321"/>
        <dbReference type="Rhea" id="RHEA-COMP:11322"/>
        <dbReference type="ChEBI" id="CHEBI:15378"/>
        <dbReference type="ChEBI" id="CHEBI:30616"/>
        <dbReference type="ChEBI" id="CHEBI:43176"/>
        <dbReference type="ChEBI" id="CHEBI:68546"/>
        <dbReference type="ChEBI" id="CHEBI:456216"/>
        <dbReference type="EC" id="2.7.11.23"/>
    </reaction>
</comment>
<comment type="cofactor">
    <cofactor evidence="1">
        <name>Mg(2+)</name>
        <dbReference type="ChEBI" id="CHEBI:18420"/>
    </cofactor>
</comment>
<comment type="subunit">
    <text evidence="1">Component of the srb8-11 complex, a regulatory module of the Mediator complex.</text>
</comment>
<comment type="subcellular location">
    <subcellularLocation>
        <location evidence="5">Nucleus</location>
    </subcellularLocation>
</comment>
<comment type="similarity">
    <text evidence="5">Belongs to the protein kinase superfamily. CMGC Ser/Thr protein kinase family. CDC2/CDKX subfamily.</text>
</comment>
<comment type="sequence caution" evidence="5">
    <conflict type="erroneous gene model prediction">
        <sequence resource="EMBL-CDS" id="BAE60857"/>
    </conflict>
</comment>
<accession>Q2UC58</accession>
<keyword id="KW-0010">Activator</keyword>
<keyword id="KW-0067">ATP-binding</keyword>
<keyword id="KW-0418">Kinase</keyword>
<keyword id="KW-0460">Magnesium</keyword>
<keyword id="KW-0479">Metal-binding</keyword>
<keyword id="KW-0547">Nucleotide-binding</keyword>
<keyword id="KW-0539">Nucleus</keyword>
<keyword id="KW-1185">Reference proteome</keyword>
<keyword id="KW-0678">Repressor</keyword>
<keyword id="KW-0723">Serine/threonine-protein kinase</keyword>
<keyword id="KW-0804">Transcription</keyword>
<keyword id="KW-0805">Transcription regulation</keyword>
<keyword id="KW-0808">Transferase</keyword>
<sequence length="413" mass="46348">MLKEHLDPRKPSGTGYTSKVRVRDKYHIVGFISSGTYGRVYKALGKNGQKGEFAIKKFKPDKEGEIIQYTGLSQSAIREMALCSELDHANVVQLEEIILEDKAIFMVFEYTEHDLLQIIHHHTQPHRHAIPAPMVRSILFQLLNGLLYLHTSWVLHRDLKPANILVTSSGAIRIGDLGLARLFYKPLNSLFSGDKVVVTIWYRAPELLMGSRHYTPAVDLWAVGCIFAELLSLRPIFKGEEAKMDSKKTVPFQRNQMMKIIEIMGLPTKDIWPGIVSMPEYSQLQSLAMSRAPGHFPRSSNLEGWYQSCLKNGGYATSSGAGTPGADGYDLLSRLLEYDPTKRITAQEALEHPYFKNGGPISANCFEGFEGKYPHRRVTQDDNDIRSGSLPGTKRSGLPDDSLMGRASKRLKE</sequence>
<name>SSN3_ASPOR</name>
<evidence type="ECO:0000250" key="1"/>
<evidence type="ECO:0000255" key="2">
    <source>
        <dbReference type="PROSITE-ProRule" id="PRU00159"/>
    </source>
</evidence>
<evidence type="ECO:0000255" key="3">
    <source>
        <dbReference type="PROSITE-ProRule" id="PRU10027"/>
    </source>
</evidence>
<evidence type="ECO:0000256" key="4">
    <source>
        <dbReference type="SAM" id="MobiDB-lite"/>
    </source>
</evidence>
<evidence type="ECO:0000305" key="5"/>
<organism>
    <name type="scientific">Aspergillus oryzae (strain ATCC 42149 / RIB 40)</name>
    <name type="common">Yellow koji mold</name>
    <dbReference type="NCBI Taxonomy" id="510516"/>
    <lineage>
        <taxon>Eukaryota</taxon>
        <taxon>Fungi</taxon>
        <taxon>Dikarya</taxon>
        <taxon>Ascomycota</taxon>
        <taxon>Pezizomycotina</taxon>
        <taxon>Eurotiomycetes</taxon>
        <taxon>Eurotiomycetidae</taxon>
        <taxon>Eurotiales</taxon>
        <taxon>Aspergillaceae</taxon>
        <taxon>Aspergillus</taxon>
        <taxon>Aspergillus subgen. Circumdati</taxon>
    </lineage>
</organism>
<reference key="1">
    <citation type="journal article" date="2005" name="Nature">
        <title>Genome sequencing and analysis of Aspergillus oryzae.</title>
        <authorList>
            <person name="Machida M."/>
            <person name="Asai K."/>
            <person name="Sano M."/>
            <person name="Tanaka T."/>
            <person name="Kumagai T."/>
            <person name="Terai G."/>
            <person name="Kusumoto K."/>
            <person name="Arima T."/>
            <person name="Akita O."/>
            <person name="Kashiwagi Y."/>
            <person name="Abe K."/>
            <person name="Gomi K."/>
            <person name="Horiuchi H."/>
            <person name="Kitamoto K."/>
            <person name="Kobayashi T."/>
            <person name="Takeuchi M."/>
            <person name="Denning D.W."/>
            <person name="Galagan J.E."/>
            <person name="Nierman W.C."/>
            <person name="Yu J."/>
            <person name="Archer D.B."/>
            <person name="Bennett J.W."/>
            <person name="Bhatnagar D."/>
            <person name="Cleveland T.E."/>
            <person name="Fedorova N.D."/>
            <person name="Gotoh O."/>
            <person name="Horikawa H."/>
            <person name="Hosoyama A."/>
            <person name="Ichinomiya M."/>
            <person name="Igarashi R."/>
            <person name="Iwashita K."/>
            <person name="Juvvadi P.R."/>
            <person name="Kato M."/>
            <person name="Kato Y."/>
            <person name="Kin T."/>
            <person name="Kokubun A."/>
            <person name="Maeda H."/>
            <person name="Maeyama N."/>
            <person name="Maruyama J."/>
            <person name="Nagasaki H."/>
            <person name="Nakajima T."/>
            <person name="Oda K."/>
            <person name="Okada K."/>
            <person name="Paulsen I."/>
            <person name="Sakamoto K."/>
            <person name="Sawano T."/>
            <person name="Takahashi M."/>
            <person name="Takase K."/>
            <person name="Terabayashi Y."/>
            <person name="Wortman J.R."/>
            <person name="Yamada O."/>
            <person name="Yamagata Y."/>
            <person name="Anazawa H."/>
            <person name="Hata Y."/>
            <person name="Koide Y."/>
            <person name="Komori T."/>
            <person name="Koyama Y."/>
            <person name="Minetoki T."/>
            <person name="Suharnan S."/>
            <person name="Tanaka A."/>
            <person name="Isono K."/>
            <person name="Kuhara S."/>
            <person name="Ogasawara N."/>
            <person name="Kikuchi H."/>
        </authorList>
    </citation>
    <scope>NUCLEOTIDE SEQUENCE [LARGE SCALE GENOMIC DNA]</scope>
    <source>
        <strain>ATCC 42149 / RIB 40</strain>
    </source>
</reference>
<protein>
    <recommendedName>
        <fullName>Serine/threonine-protein kinase SSN3</fullName>
        <ecNumber>2.7.11.22</ecNumber>
        <ecNumber>2.7.11.23</ecNumber>
    </recommendedName>
    <alternativeName>
        <fullName>Cyclin-dependent kinase 8</fullName>
    </alternativeName>
</protein>
<gene>
    <name type="primary">ssn3</name>
    <name type="synonym">cdk8</name>
    <name type="ORF">AO090012000729</name>
</gene>